<gene>
    <name type="primary">stk3</name>
    <name type="ORF">zgc:55383</name>
</gene>
<feature type="chain" id="PRO_0000247765" description="Serine/threonine-protein kinase 3">
    <location>
        <begin position="1"/>
        <end position="492"/>
    </location>
</feature>
<feature type="chain" id="PRO_0000413719" description="Serine/threonine-protein kinase 3 36kDa subunit">
    <location>
        <begin position="1"/>
        <end position="322"/>
    </location>
</feature>
<feature type="chain" id="PRO_0000413720" description="Serine/threonine-protein kinase 3 20kDa subunit">
    <location>
        <begin position="323"/>
        <end position="492"/>
    </location>
</feature>
<feature type="domain" description="Protein kinase" evidence="4">
    <location>
        <begin position="26"/>
        <end position="277"/>
    </location>
</feature>
<feature type="domain" description="SARAH" evidence="5">
    <location>
        <begin position="438"/>
        <end position="485"/>
    </location>
</feature>
<feature type="region of interest" description="Disordered" evidence="6">
    <location>
        <begin position="297"/>
        <end position="339"/>
    </location>
</feature>
<feature type="coiled-coil region" evidence="3">
    <location>
        <begin position="286"/>
        <end position="328"/>
    </location>
</feature>
<feature type="coiled-coil region" evidence="3">
    <location>
        <begin position="443"/>
        <end position="476"/>
    </location>
</feature>
<feature type="compositionally biased region" description="Basic and acidic residues" evidence="6">
    <location>
        <begin position="297"/>
        <end position="307"/>
    </location>
</feature>
<feature type="compositionally biased region" description="Acidic residues" evidence="6">
    <location>
        <begin position="308"/>
        <end position="320"/>
    </location>
</feature>
<feature type="compositionally biased region" description="Polar residues" evidence="6">
    <location>
        <begin position="326"/>
        <end position="339"/>
    </location>
</feature>
<feature type="active site" description="Proton acceptor" evidence="4">
    <location>
        <position position="145"/>
    </location>
</feature>
<feature type="binding site" evidence="4">
    <location>
        <begin position="32"/>
        <end position="40"/>
    </location>
    <ligand>
        <name>ATP</name>
        <dbReference type="ChEBI" id="CHEBI:30616"/>
    </ligand>
</feature>
<feature type="binding site" evidence="4">
    <location>
        <position position="55"/>
    </location>
    <ligand>
        <name>ATP</name>
        <dbReference type="ChEBI" id="CHEBI:30616"/>
    </ligand>
</feature>
<feature type="site" description="Cleavage; by caspase-3" evidence="1">
    <location>
        <begin position="322"/>
        <end position="323"/>
    </location>
</feature>
<feature type="modified residue" description="Phosphothreonine; by autocatalysis" evidence="1">
    <location>
        <position position="179"/>
    </location>
</feature>
<proteinExistence type="evidence at transcript level"/>
<accession>Q7ZUQ3</accession>
<organism>
    <name type="scientific">Danio rerio</name>
    <name type="common">Zebrafish</name>
    <name type="synonym">Brachydanio rerio</name>
    <dbReference type="NCBI Taxonomy" id="7955"/>
    <lineage>
        <taxon>Eukaryota</taxon>
        <taxon>Metazoa</taxon>
        <taxon>Chordata</taxon>
        <taxon>Craniata</taxon>
        <taxon>Vertebrata</taxon>
        <taxon>Euteleostomi</taxon>
        <taxon>Actinopterygii</taxon>
        <taxon>Neopterygii</taxon>
        <taxon>Teleostei</taxon>
        <taxon>Ostariophysi</taxon>
        <taxon>Cypriniformes</taxon>
        <taxon>Danionidae</taxon>
        <taxon>Danioninae</taxon>
        <taxon>Danio</taxon>
    </lineage>
</organism>
<sequence>MEHSVPKNKLKKLSEDSLTKQPEEVFDVLEKLGEGSYGSVFKAIHKESGQVVAIKQVPVESDLQEIIKEISIMQQCDSPYVVKYYGSYFKNTDLWIVMEYCGAGSVSDIIRLRNKTLTEDEIATVLKSTLKGLEYLHFMRKIHRDIKAGNILLNTEGHAKLADFGVAGQLTDTMAKRNTVIGTPFWMAPEVIQEIGYNCVADIWSLGITSIEMAEGKPPYADIHPMRAIFMIPTNPPPTFRKPEHWSDDFTDFVKKCLVKNPEQRATATQLLQHPFIVGAKPVSILRDLITEAMDMKAKRQQEQQRELEEDDENSEEEVEVDSHTMVKSGSESAGTMRATGTMSDGAQTMIEHGSTMLESNLGTMVINSDDEEEEEDLGSMRRNPTSQQIQRPSFMDYFDKQDSNKAQEGFNHNQQDPCLISKTAFPDNWKVPQDGDFDFLKNLDFEELQMRLTALDPMMEREIEELRQRYTAKRQPILDAMDAKKRRQQNF</sequence>
<protein>
    <recommendedName>
        <fullName>Serine/threonine-protein kinase 3</fullName>
        <ecNumber>2.7.11.1</ecNumber>
    </recommendedName>
    <component>
        <recommendedName>
            <fullName>Serine/threonine-protein kinase 3 36kDa subunit</fullName>
            <shortName>MST2/N</shortName>
        </recommendedName>
    </component>
    <component>
        <recommendedName>
            <fullName>Serine/threonine-protein kinase 3 20kDa subunit</fullName>
            <shortName>MST2/C</shortName>
        </recommendedName>
    </component>
</protein>
<reference key="1">
    <citation type="submission" date="2003-03" db="EMBL/GenBank/DDBJ databases">
        <authorList>
            <consortium name="NIH - Zebrafish Gene Collection (ZGC) project"/>
        </authorList>
    </citation>
    <scope>NUCLEOTIDE SEQUENCE [LARGE SCALE MRNA]</scope>
    <source>
        <strain>AB</strain>
    </source>
</reference>
<evidence type="ECO:0000250" key="1"/>
<evidence type="ECO:0000250" key="2">
    <source>
        <dbReference type="UniProtKB" id="Q13188"/>
    </source>
</evidence>
<evidence type="ECO:0000255" key="3"/>
<evidence type="ECO:0000255" key="4">
    <source>
        <dbReference type="PROSITE-ProRule" id="PRU00159"/>
    </source>
</evidence>
<evidence type="ECO:0000255" key="5">
    <source>
        <dbReference type="PROSITE-ProRule" id="PRU00310"/>
    </source>
</evidence>
<evidence type="ECO:0000256" key="6">
    <source>
        <dbReference type="SAM" id="MobiDB-lite"/>
    </source>
</evidence>
<evidence type="ECO:0000305" key="7"/>
<keyword id="KW-0053">Apoptosis</keyword>
<keyword id="KW-0067">ATP-binding</keyword>
<keyword id="KW-0175">Coiled coil</keyword>
<keyword id="KW-0963">Cytoplasm</keyword>
<keyword id="KW-0418">Kinase</keyword>
<keyword id="KW-0460">Magnesium</keyword>
<keyword id="KW-0479">Metal-binding</keyword>
<keyword id="KW-0547">Nucleotide-binding</keyword>
<keyword id="KW-0539">Nucleus</keyword>
<keyword id="KW-0597">Phosphoprotein</keyword>
<keyword id="KW-1185">Reference proteome</keyword>
<keyword id="KW-0723">Serine/threonine-protein kinase</keyword>
<keyword id="KW-0808">Transferase</keyword>
<dbReference type="EC" id="2.7.11.1"/>
<dbReference type="EMBL" id="BC048033">
    <property type="protein sequence ID" value="AAH48033.1"/>
    <property type="molecule type" value="mRNA"/>
</dbReference>
<dbReference type="RefSeq" id="NP_955966.1">
    <property type="nucleotide sequence ID" value="NM_199672.1"/>
</dbReference>
<dbReference type="SMR" id="Q7ZUQ3"/>
<dbReference type="FunCoup" id="Q7ZUQ3">
    <property type="interactions" value="1217"/>
</dbReference>
<dbReference type="STRING" id="7955.ENSDARP00000015367"/>
<dbReference type="PaxDb" id="7955-ENSDARP00000015367"/>
<dbReference type="Ensembl" id="ENSDART00000008698">
    <property type="protein sequence ID" value="ENSDARP00000015367"/>
    <property type="gene ID" value="ENSDARG00000011312"/>
</dbReference>
<dbReference type="Ensembl" id="ENSDART00000189278">
    <property type="protein sequence ID" value="ENSDARP00000150967"/>
    <property type="gene ID" value="ENSDARG00000115118"/>
</dbReference>
<dbReference type="GeneID" id="324125"/>
<dbReference type="KEGG" id="dre:324125"/>
<dbReference type="AGR" id="ZFIN:ZDB-GENE-030131-2845"/>
<dbReference type="CTD" id="6788"/>
<dbReference type="ZFIN" id="ZDB-GENE-030131-2845">
    <property type="gene designation" value="stk3"/>
</dbReference>
<dbReference type="eggNOG" id="KOG0574">
    <property type="taxonomic scope" value="Eukaryota"/>
</dbReference>
<dbReference type="HOGENOM" id="CLU_000288_63_23_1"/>
<dbReference type="InParanoid" id="Q7ZUQ3"/>
<dbReference type="OMA" id="LNQISHP"/>
<dbReference type="OrthoDB" id="8693905at2759"/>
<dbReference type="PhylomeDB" id="Q7ZUQ3"/>
<dbReference type="TreeFam" id="TF354217"/>
<dbReference type="Reactome" id="R-DRE-2028269">
    <property type="pathway name" value="Signaling by Hippo"/>
</dbReference>
<dbReference type="PRO" id="PR:Q7ZUQ3"/>
<dbReference type="Proteomes" id="UP000000437">
    <property type="component" value="Alternate scaffold 19"/>
</dbReference>
<dbReference type="Proteomes" id="UP000000437">
    <property type="component" value="Chromosome 19"/>
</dbReference>
<dbReference type="Bgee" id="ENSDARG00000011312">
    <property type="expression patterns" value="Expressed in early embryo and 27 other cell types or tissues"/>
</dbReference>
<dbReference type="ExpressionAtlas" id="Q7ZUQ3">
    <property type="expression patterns" value="baseline and differential"/>
</dbReference>
<dbReference type="GO" id="GO:0005737">
    <property type="term" value="C:cytoplasm"/>
    <property type="evidence" value="ECO:0000250"/>
    <property type="project" value="UniProtKB"/>
</dbReference>
<dbReference type="GO" id="GO:0005634">
    <property type="term" value="C:nucleus"/>
    <property type="evidence" value="ECO:0000250"/>
    <property type="project" value="UniProtKB"/>
</dbReference>
<dbReference type="GO" id="GO:0005524">
    <property type="term" value="F:ATP binding"/>
    <property type="evidence" value="ECO:0007669"/>
    <property type="project" value="UniProtKB-KW"/>
</dbReference>
<dbReference type="GO" id="GO:0046872">
    <property type="term" value="F:metal ion binding"/>
    <property type="evidence" value="ECO:0007669"/>
    <property type="project" value="UniProtKB-KW"/>
</dbReference>
<dbReference type="GO" id="GO:0004672">
    <property type="term" value="F:protein kinase activity"/>
    <property type="evidence" value="ECO:0000250"/>
    <property type="project" value="UniProtKB"/>
</dbReference>
<dbReference type="GO" id="GO:0106310">
    <property type="term" value="F:protein serine kinase activity"/>
    <property type="evidence" value="ECO:0007669"/>
    <property type="project" value="RHEA"/>
</dbReference>
<dbReference type="GO" id="GO:0004674">
    <property type="term" value="F:protein serine/threonine kinase activity"/>
    <property type="evidence" value="ECO:0000318"/>
    <property type="project" value="GO_Central"/>
</dbReference>
<dbReference type="GO" id="GO:0006915">
    <property type="term" value="P:apoptotic process"/>
    <property type="evidence" value="ECO:0007669"/>
    <property type="project" value="UniProtKB-KW"/>
</dbReference>
<dbReference type="GO" id="GO:0043010">
    <property type="term" value="P:camera-type eye development"/>
    <property type="evidence" value="ECO:0000315"/>
    <property type="project" value="ZFIN"/>
</dbReference>
<dbReference type="GO" id="GO:0035329">
    <property type="term" value="P:hippo signaling"/>
    <property type="evidence" value="ECO:0000250"/>
    <property type="project" value="UniProtKB"/>
</dbReference>
<dbReference type="GO" id="GO:0035556">
    <property type="term" value="P:intracellular signal transduction"/>
    <property type="evidence" value="ECO:0000318"/>
    <property type="project" value="GO_Central"/>
</dbReference>
<dbReference type="GO" id="GO:0090090">
    <property type="term" value="P:negative regulation of canonical Wnt signaling pathway"/>
    <property type="evidence" value="ECO:0000318"/>
    <property type="project" value="GO_Central"/>
</dbReference>
<dbReference type="GO" id="GO:0043065">
    <property type="term" value="P:positive regulation of apoptotic process"/>
    <property type="evidence" value="ECO:0000318"/>
    <property type="project" value="GO_Central"/>
</dbReference>
<dbReference type="GO" id="GO:0051262">
    <property type="term" value="P:protein tetramerization"/>
    <property type="evidence" value="ECO:0007669"/>
    <property type="project" value="InterPro"/>
</dbReference>
<dbReference type="GO" id="GO:0043408">
    <property type="term" value="P:regulation of MAPK cascade"/>
    <property type="evidence" value="ECO:0000318"/>
    <property type="project" value="GO_Central"/>
</dbReference>
<dbReference type="CDD" id="cd21888">
    <property type="entry name" value="SARAH_MST2"/>
    <property type="match status" value="1"/>
</dbReference>
<dbReference type="CDD" id="cd06612">
    <property type="entry name" value="STKc_MST1_2"/>
    <property type="match status" value="1"/>
</dbReference>
<dbReference type="FunFam" id="1.10.287.4270:FF:000001">
    <property type="entry name" value="Serine/threonine-protein kinase 3"/>
    <property type="match status" value="1"/>
</dbReference>
<dbReference type="FunFam" id="1.10.510.10:FF:000075">
    <property type="entry name" value="Serine/threonine-protein kinase 3"/>
    <property type="match status" value="1"/>
</dbReference>
<dbReference type="FunFam" id="3.30.200.20:FF:000410">
    <property type="entry name" value="Serine/threonine-protein kinase 3"/>
    <property type="match status" value="1"/>
</dbReference>
<dbReference type="FunFam" id="4.10.170.10:FF:000002">
    <property type="entry name" value="serine/threonine-protein kinase 3"/>
    <property type="match status" value="1"/>
</dbReference>
<dbReference type="Gene3D" id="1.10.287.4270">
    <property type="match status" value="1"/>
</dbReference>
<dbReference type="Gene3D" id="4.10.170.10">
    <property type="entry name" value="p53-like tetramerisation domain"/>
    <property type="match status" value="1"/>
</dbReference>
<dbReference type="Gene3D" id="1.10.510.10">
    <property type="entry name" value="Transferase(Phosphotransferase) domain 1"/>
    <property type="match status" value="1"/>
</dbReference>
<dbReference type="InterPro" id="IPR011009">
    <property type="entry name" value="Kinase-like_dom_sf"/>
</dbReference>
<dbReference type="InterPro" id="IPR024205">
    <property type="entry name" value="Mst1_2_SARAH_domain"/>
</dbReference>
<dbReference type="InterPro" id="IPR049568">
    <property type="entry name" value="Mst2_SARAH"/>
</dbReference>
<dbReference type="InterPro" id="IPR036674">
    <property type="entry name" value="p53_tetramer_sf"/>
</dbReference>
<dbReference type="InterPro" id="IPR000719">
    <property type="entry name" value="Prot_kinase_dom"/>
</dbReference>
<dbReference type="InterPro" id="IPR017441">
    <property type="entry name" value="Protein_kinase_ATP_BS"/>
</dbReference>
<dbReference type="InterPro" id="IPR011524">
    <property type="entry name" value="SARAH_dom"/>
</dbReference>
<dbReference type="InterPro" id="IPR050629">
    <property type="entry name" value="STE20/SPS1-PAK"/>
</dbReference>
<dbReference type="PANTHER" id="PTHR48012:SF2">
    <property type="entry name" value="STERILE20-LIKE KINASE, ISOFORM B"/>
    <property type="match status" value="1"/>
</dbReference>
<dbReference type="PANTHER" id="PTHR48012">
    <property type="entry name" value="STERILE20-LIKE KINASE, ISOFORM B-RELATED"/>
    <property type="match status" value="1"/>
</dbReference>
<dbReference type="Pfam" id="PF11629">
    <property type="entry name" value="Mst1_SARAH"/>
    <property type="match status" value="1"/>
</dbReference>
<dbReference type="Pfam" id="PF00069">
    <property type="entry name" value="Pkinase"/>
    <property type="match status" value="1"/>
</dbReference>
<dbReference type="SMART" id="SM00220">
    <property type="entry name" value="S_TKc"/>
    <property type="match status" value="1"/>
</dbReference>
<dbReference type="SUPFAM" id="SSF56112">
    <property type="entry name" value="Protein kinase-like (PK-like)"/>
    <property type="match status" value="1"/>
</dbReference>
<dbReference type="PROSITE" id="PS00107">
    <property type="entry name" value="PROTEIN_KINASE_ATP"/>
    <property type="match status" value="1"/>
</dbReference>
<dbReference type="PROSITE" id="PS50011">
    <property type="entry name" value="PROTEIN_KINASE_DOM"/>
    <property type="match status" value="1"/>
</dbReference>
<dbReference type="PROSITE" id="PS50951">
    <property type="entry name" value="SARAH"/>
    <property type="match status" value="1"/>
</dbReference>
<name>STK3_DANRE</name>
<comment type="function">
    <text evidence="2">Stress-activated, pro-apoptotic kinase which, following caspase-cleavage, enters the nucleus and induces chromatin condensation followed by internucleosomal DNA fragmentation. Key component of the Hippo signaling pathway which plays a pivotal role in organ size control and tumor suppression by restricting proliferation and promoting apoptosis. The core of this pathway is composed of a kinase cascade wherein stk3/mst2 and stk4/mst1, in complex with its regulatory protein sav1, phosphorylates and activates lats1/2 in complex with its regulatory protein mob1, which in turn phosphorylates and inactivates yap1 oncoprotein and wwtr1/taz. Phosphorylation of yap1 by lats2 inhibits its translocation into the nucleus to regulate cellular genes important for cell proliferation, cell death, and cell migration.</text>
</comment>
<comment type="catalytic activity">
    <reaction>
        <text>L-seryl-[protein] + ATP = O-phospho-L-seryl-[protein] + ADP + H(+)</text>
        <dbReference type="Rhea" id="RHEA:17989"/>
        <dbReference type="Rhea" id="RHEA-COMP:9863"/>
        <dbReference type="Rhea" id="RHEA-COMP:11604"/>
        <dbReference type="ChEBI" id="CHEBI:15378"/>
        <dbReference type="ChEBI" id="CHEBI:29999"/>
        <dbReference type="ChEBI" id="CHEBI:30616"/>
        <dbReference type="ChEBI" id="CHEBI:83421"/>
        <dbReference type="ChEBI" id="CHEBI:456216"/>
        <dbReference type="EC" id="2.7.11.1"/>
    </reaction>
</comment>
<comment type="catalytic activity">
    <reaction>
        <text>L-threonyl-[protein] + ATP = O-phospho-L-threonyl-[protein] + ADP + H(+)</text>
        <dbReference type="Rhea" id="RHEA:46608"/>
        <dbReference type="Rhea" id="RHEA-COMP:11060"/>
        <dbReference type="Rhea" id="RHEA-COMP:11605"/>
        <dbReference type="ChEBI" id="CHEBI:15378"/>
        <dbReference type="ChEBI" id="CHEBI:30013"/>
        <dbReference type="ChEBI" id="CHEBI:30616"/>
        <dbReference type="ChEBI" id="CHEBI:61977"/>
        <dbReference type="ChEBI" id="CHEBI:456216"/>
        <dbReference type="EC" id="2.7.11.1"/>
    </reaction>
</comment>
<comment type="cofactor">
    <cofactor evidence="1">
        <name>Mg(2+)</name>
        <dbReference type="ChEBI" id="CHEBI:18420"/>
    </cofactor>
</comment>
<comment type="activity regulation">
    <text evidence="1">Inhibited by the C-terminal non-catalytic region. Activated by caspase-cleavage. Full activation also requires homodimerization and autophosphorylation of Thr-179 (By similarity).</text>
</comment>
<comment type="subunit">
    <text evidence="1">Homodimer; mediated via the coiled-coil region.</text>
</comment>
<comment type="subcellular location">
    <subcellularLocation>
        <location evidence="2">Cytoplasm</location>
    </subcellularLocation>
    <subcellularLocation>
        <location evidence="2">Nucleus</location>
    </subcellularLocation>
    <text evidence="2">The caspase-cleaved form cycles between nucleus and cytoplasm.</text>
</comment>
<comment type="similarity">
    <text evidence="7">Belongs to the protein kinase superfamily. STE Ser/Thr protein kinase family. STE20 subfamily.</text>
</comment>